<reference key="1">
    <citation type="journal article" date="2008" name="Appl. Environ. Microbiol.">
        <title>Genome of the epsilonproteobacterial chemolithoautotroph Sulfurimonas denitrificans.</title>
        <authorList>
            <person name="Sievert S.M."/>
            <person name="Scott K.M."/>
            <person name="Klotz M.G."/>
            <person name="Chain P.S.G."/>
            <person name="Hauser L.J."/>
            <person name="Hemp J."/>
            <person name="Huegler M."/>
            <person name="Land M."/>
            <person name="Lapidus A."/>
            <person name="Larimer F.W."/>
            <person name="Lucas S."/>
            <person name="Malfatti S.A."/>
            <person name="Meyer F."/>
            <person name="Paulsen I.T."/>
            <person name="Ren Q."/>
            <person name="Simon J."/>
            <person name="Bailey K."/>
            <person name="Diaz E."/>
            <person name="Fitzpatrick K.A."/>
            <person name="Glover B."/>
            <person name="Gwatney N."/>
            <person name="Korajkic A."/>
            <person name="Long A."/>
            <person name="Mobberley J.M."/>
            <person name="Pantry S.N."/>
            <person name="Pazder G."/>
            <person name="Peterson S."/>
            <person name="Quintanilla J.D."/>
            <person name="Sprinkle R."/>
            <person name="Stephens J."/>
            <person name="Thomas P."/>
            <person name="Vaughn R."/>
            <person name="Weber M.J."/>
            <person name="Wooten L.L."/>
        </authorList>
    </citation>
    <scope>NUCLEOTIDE SEQUENCE [LARGE SCALE GENOMIC DNA]</scope>
    <source>
        <strain>ATCC 33889 / DSM 1251</strain>
    </source>
</reference>
<accession>Q30TQ4</accession>
<proteinExistence type="inferred from homology"/>
<keyword id="KW-1185">Reference proteome</keyword>
<keyword id="KW-0687">Ribonucleoprotein</keyword>
<keyword id="KW-0689">Ribosomal protein</keyword>
<name>RL33_SULDN</name>
<organism>
    <name type="scientific">Sulfurimonas denitrificans (strain ATCC 33889 / DSM 1251)</name>
    <name type="common">Thiomicrospira denitrificans (strain ATCC 33889 / DSM 1251)</name>
    <dbReference type="NCBI Taxonomy" id="326298"/>
    <lineage>
        <taxon>Bacteria</taxon>
        <taxon>Pseudomonadati</taxon>
        <taxon>Campylobacterota</taxon>
        <taxon>Epsilonproteobacteria</taxon>
        <taxon>Campylobacterales</taxon>
        <taxon>Sulfurimonadaceae</taxon>
        <taxon>Sulfurimonas</taxon>
    </lineage>
</organism>
<dbReference type="EMBL" id="CP000153">
    <property type="protein sequence ID" value="ABB43627.1"/>
    <property type="molecule type" value="Genomic_DNA"/>
</dbReference>
<dbReference type="RefSeq" id="WP_011371981.1">
    <property type="nucleotide sequence ID" value="NC_007575.1"/>
</dbReference>
<dbReference type="SMR" id="Q30TQ4"/>
<dbReference type="STRING" id="326298.Suden_0346"/>
<dbReference type="KEGG" id="tdn:Suden_0346"/>
<dbReference type="eggNOG" id="COG0267">
    <property type="taxonomic scope" value="Bacteria"/>
</dbReference>
<dbReference type="HOGENOM" id="CLU_190949_0_2_7"/>
<dbReference type="Proteomes" id="UP000002714">
    <property type="component" value="Chromosome"/>
</dbReference>
<dbReference type="GO" id="GO:0005737">
    <property type="term" value="C:cytoplasm"/>
    <property type="evidence" value="ECO:0007669"/>
    <property type="project" value="UniProtKB-ARBA"/>
</dbReference>
<dbReference type="GO" id="GO:1990904">
    <property type="term" value="C:ribonucleoprotein complex"/>
    <property type="evidence" value="ECO:0007669"/>
    <property type="project" value="UniProtKB-KW"/>
</dbReference>
<dbReference type="GO" id="GO:0005840">
    <property type="term" value="C:ribosome"/>
    <property type="evidence" value="ECO:0007669"/>
    <property type="project" value="UniProtKB-KW"/>
</dbReference>
<dbReference type="GO" id="GO:0003735">
    <property type="term" value="F:structural constituent of ribosome"/>
    <property type="evidence" value="ECO:0007669"/>
    <property type="project" value="InterPro"/>
</dbReference>
<dbReference type="GO" id="GO:0006412">
    <property type="term" value="P:translation"/>
    <property type="evidence" value="ECO:0007669"/>
    <property type="project" value="UniProtKB-UniRule"/>
</dbReference>
<dbReference type="Gene3D" id="2.20.28.120">
    <property type="entry name" value="Ribosomal protein L33"/>
    <property type="match status" value="1"/>
</dbReference>
<dbReference type="HAMAP" id="MF_00294">
    <property type="entry name" value="Ribosomal_bL33"/>
    <property type="match status" value="1"/>
</dbReference>
<dbReference type="InterPro" id="IPR001705">
    <property type="entry name" value="Ribosomal_bL33"/>
</dbReference>
<dbReference type="InterPro" id="IPR018264">
    <property type="entry name" value="Ribosomal_bL33_CS"/>
</dbReference>
<dbReference type="InterPro" id="IPR038584">
    <property type="entry name" value="Ribosomal_bL33_sf"/>
</dbReference>
<dbReference type="InterPro" id="IPR011332">
    <property type="entry name" value="Ribosomal_zn-bd"/>
</dbReference>
<dbReference type="NCBIfam" id="NF001764">
    <property type="entry name" value="PRK00504.1"/>
    <property type="match status" value="1"/>
</dbReference>
<dbReference type="NCBIfam" id="NF001860">
    <property type="entry name" value="PRK00595.1"/>
    <property type="match status" value="1"/>
</dbReference>
<dbReference type="NCBIfam" id="TIGR01023">
    <property type="entry name" value="rpmG_bact"/>
    <property type="match status" value="1"/>
</dbReference>
<dbReference type="Pfam" id="PF00471">
    <property type="entry name" value="Ribosomal_L33"/>
    <property type="match status" value="1"/>
</dbReference>
<dbReference type="SUPFAM" id="SSF57829">
    <property type="entry name" value="Zn-binding ribosomal proteins"/>
    <property type="match status" value="1"/>
</dbReference>
<dbReference type="PROSITE" id="PS00582">
    <property type="entry name" value="RIBOSOMAL_L33"/>
    <property type="match status" value="1"/>
</dbReference>
<protein>
    <recommendedName>
        <fullName evidence="1">Large ribosomal subunit protein bL33</fullName>
    </recommendedName>
    <alternativeName>
        <fullName evidence="2">50S ribosomal protein L33</fullName>
    </alternativeName>
</protein>
<evidence type="ECO:0000255" key="1">
    <source>
        <dbReference type="HAMAP-Rule" id="MF_00294"/>
    </source>
</evidence>
<evidence type="ECO:0000305" key="2"/>
<feature type="chain" id="PRO_0000356755" description="Large ribosomal subunit protein bL33">
    <location>
        <begin position="1"/>
        <end position="50"/>
    </location>
</feature>
<gene>
    <name evidence="1" type="primary">rpmG</name>
    <name type="ordered locus">Suden_0346</name>
</gene>
<comment type="similarity">
    <text evidence="1">Belongs to the bacterial ribosomal protein bL33 family.</text>
</comment>
<sequence>MREAIHLGCEKCTRRNYHTTKNKKTHTEKFSVKKYCKFCREHTLHKEMKL</sequence>